<proteinExistence type="evidence at protein level"/>
<reference key="1">
    <citation type="journal article" date="1996" name="J. Biol. Chem.">
        <title>Cloning of the cDNA for a novel photoreceptor protein.</title>
        <authorList>
            <person name="Higashide T."/>
            <person name="Murakami A."/>
            <person name="McLaren M.J."/>
            <person name="Inana G."/>
        </authorList>
    </citation>
    <scope>NUCLEOTIDE SEQUENCE [MRNA]</scope>
    <source>
        <strain>Long Evans</strain>
        <tissue>Retina</tissue>
    </source>
</reference>
<reference key="2">
    <citation type="journal article" date="2004" name="Genome Res.">
        <title>The status, quality, and expansion of the NIH full-length cDNA project: the Mammalian Gene Collection (MGC).</title>
        <authorList>
            <consortium name="The MGC Project Team"/>
        </authorList>
    </citation>
    <scope>NUCLEOTIDE SEQUENCE [LARGE SCALE MRNA]</scope>
    <source>
        <tissue>Prostate</tissue>
    </source>
</reference>
<reference key="3">
    <citation type="journal article" date="2003" name="FEBS Lett.">
        <title>Photoreceptor synaptic protein HRG4 (UNC119) interacts with ARL2 via a putative conserved domain.</title>
        <authorList>
            <person name="Kobayashi A."/>
            <person name="Kubota S."/>
            <person name="Mori N."/>
            <person name="McLaren M.J."/>
            <person name="Inana G."/>
        </authorList>
    </citation>
    <scope>INTERACTION WITH ARL2</scope>
    <scope>TISSUE SPECIFICITY</scope>
</reference>
<reference key="4">
    <citation type="journal article" date="2012" name="Nat. Commun.">
        <title>Quantitative maps of protein phosphorylation sites across 14 different rat organs and tissues.</title>
        <authorList>
            <person name="Lundby A."/>
            <person name="Secher A."/>
            <person name="Lage K."/>
            <person name="Nordsborg N.B."/>
            <person name="Dmytriyev A."/>
            <person name="Lundby C."/>
            <person name="Olsen J.V."/>
        </authorList>
    </citation>
    <scope>PHOSPHORYLATION [LARGE SCALE ANALYSIS] AT SER-37; SER-39 AND SER-41</scope>
    <scope>IDENTIFICATION BY MASS SPECTROMETRY [LARGE SCALE ANALYSIS]</scope>
</reference>
<dbReference type="EMBL" id="U40999">
    <property type="protein sequence ID" value="AAC52389.1"/>
    <property type="molecule type" value="mRNA"/>
</dbReference>
<dbReference type="EMBL" id="BC062057">
    <property type="protein sequence ID" value="AAH62057.1"/>
    <property type="molecule type" value="mRNA"/>
</dbReference>
<dbReference type="RefSeq" id="NP_058884.1">
    <property type="nucleotide sequence ID" value="NM_017188.1"/>
</dbReference>
<dbReference type="SMR" id="Q62885"/>
<dbReference type="FunCoup" id="Q62885">
    <property type="interactions" value="1704"/>
</dbReference>
<dbReference type="STRING" id="10116.ENSRNOP00000015091"/>
<dbReference type="GlyGen" id="Q62885">
    <property type="glycosylation" value="1 site"/>
</dbReference>
<dbReference type="iPTMnet" id="Q62885"/>
<dbReference type="PhosphoSitePlus" id="Q62885"/>
<dbReference type="PaxDb" id="10116-ENSRNOP00000015091"/>
<dbReference type="Ensembl" id="ENSRNOT00000015091.8">
    <property type="protein sequence ID" value="ENSRNOP00000015091.4"/>
    <property type="gene ID" value="ENSRNOG00000011060.8"/>
</dbReference>
<dbReference type="GeneID" id="29402"/>
<dbReference type="KEGG" id="rno:29402"/>
<dbReference type="AGR" id="RGD:3942"/>
<dbReference type="CTD" id="9094"/>
<dbReference type="RGD" id="3942">
    <property type="gene designation" value="Unc119"/>
</dbReference>
<dbReference type="eggNOG" id="KOG4037">
    <property type="taxonomic scope" value="Eukaryota"/>
</dbReference>
<dbReference type="GeneTree" id="ENSGT00390000014595"/>
<dbReference type="HOGENOM" id="CLU_088825_1_1_1"/>
<dbReference type="InParanoid" id="Q62885"/>
<dbReference type="OrthoDB" id="72666at9989"/>
<dbReference type="PhylomeDB" id="Q62885"/>
<dbReference type="TreeFam" id="TF314474"/>
<dbReference type="PRO" id="PR:Q62885"/>
<dbReference type="Proteomes" id="UP000002494">
    <property type="component" value="Chromosome 10"/>
</dbReference>
<dbReference type="Bgee" id="ENSRNOG00000011060">
    <property type="expression patterns" value="Expressed in heart and 20 other cell types or tissues"/>
</dbReference>
<dbReference type="GO" id="GO:0005813">
    <property type="term" value="C:centrosome"/>
    <property type="evidence" value="ECO:0000250"/>
    <property type="project" value="UniProtKB"/>
</dbReference>
<dbReference type="GO" id="GO:0005737">
    <property type="term" value="C:cytoplasm"/>
    <property type="evidence" value="ECO:0007669"/>
    <property type="project" value="UniProtKB-KW"/>
</dbReference>
<dbReference type="GO" id="GO:0045171">
    <property type="term" value="C:intercellular bridge"/>
    <property type="evidence" value="ECO:0000250"/>
    <property type="project" value="UniProtKB"/>
</dbReference>
<dbReference type="GO" id="GO:0051233">
    <property type="term" value="C:spindle midzone"/>
    <property type="evidence" value="ECO:0000250"/>
    <property type="project" value="UniProtKB"/>
</dbReference>
<dbReference type="GO" id="GO:0000922">
    <property type="term" value="C:spindle pole"/>
    <property type="evidence" value="ECO:0000250"/>
    <property type="project" value="UniProtKB"/>
</dbReference>
<dbReference type="GO" id="GO:0008289">
    <property type="term" value="F:lipid binding"/>
    <property type="evidence" value="ECO:0000250"/>
    <property type="project" value="UniProtKB"/>
</dbReference>
<dbReference type="GO" id="GO:0006897">
    <property type="term" value="P:endocytosis"/>
    <property type="evidence" value="ECO:0007669"/>
    <property type="project" value="UniProtKB-KW"/>
</dbReference>
<dbReference type="GO" id="GO:0042953">
    <property type="term" value="P:lipoprotein transport"/>
    <property type="evidence" value="ECO:0000250"/>
    <property type="project" value="UniProtKB"/>
</dbReference>
<dbReference type="GO" id="GO:0000281">
    <property type="term" value="P:mitotic cytokinesis"/>
    <property type="evidence" value="ECO:0000250"/>
    <property type="project" value="UniProtKB"/>
</dbReference>
<dbReference type="GO" id="GO:2001287">
    <property type="term" value="P:negative regulation of caveolin-mediated endocytosis"/>
    <property type="evidence" value="ECO:0000250"/>
    <property type="project" value="UniProtKB"/>
</dbReference>
<dbReference type="GO" id="GO:1900186">
    <property type="term" value="P:negative regulation of clathrin-dependent endocytosis"/>
    <property type="evidence" value="ECO:0000250"/>
    <property type="project" value="UniProtKB"/>
</dbReference>
<dbReference type="GO" id="GO:0007399">
    <property type="term" value="P:nervous system development"/>
    <property type="evidence" value="ECO:0000318"/>
    <property type="project" value="GO_Central"/>
</dbReference>
<dbReference type="GO" id="GO:0007601">
    <property type="term" value="P:visual perception"/>
    <property type="evidence" value="ECO:0007669"/>
    <property type="project" value="UniProtKB-KW"/>
</dbReference>
<dbReference type="FunFam" id="2.70.50.40:FF:000001">
    <property type="entry name" value="protein unc-119 homolog A"/>
    <property type="match status" value="1"/>
</dbReference>
<dbReference type="Gene3D" id="2.70.50.40">
    <property type="entry name" value="GMP phosphodiesterase, delta subunit"/>
    <property type="match status" value="1"/>
</dbReference>
<dbReference type="InterPro" id="IPR014756">
    <property type="entry name" value="Ig_E-set"/>
</dbReference>
<dbReference type="InterPro" id="IPR051519">
    <property type="entry name" value="PDE6D_unc-119_myristoyl-bd"/>
</dbReference>
<dbReference type="InterPro" id="IPR008015">
    <property type="entry name" value="PDED_dom"/>
</dbReference>
<dbReference type="InterPro" id="IPR037036">
    <property type="entry name" value="PDED_dom_sf"/>
</dbReference>
<dbReference type="PANTHER" id="PTHR12951:SF5">
    <property type="entry name" value="PROTEIN UNC-119 HOMOLOG A"/>
    <property type="match status" value="1"/>
</dbReference>
<dbReference type="PANTHER" id="PTHR12951">
    <property type="entry name" value="RETINAL PROTEIN 4"/>
    <property type="match status" value="1"/>
</dbReference>
<dbReference type="Pfam" id="PF05351">
    <property type="entry name" value="GMP_PDE_delta"/>
    <property type="match status" value="1"/>
</dbReference>
<dbReference type="SUPFAM" id="SSF81296">
    <property type="entry name" value="E set domains"/>
    <property type="match status" value="1"/>
</dbReference>
<accession>Q62885</accession>
<comment type="function">
    <text evidence="2 3">Involved in synaptic functions in photoreceptor cells, the signal transduction in immune cells as a Src family kinase activator, endosome recycling, the uptake of bacteria and endocytosis, protein trafficking in sensory neurons and as lipid-binding chaperone with specificity for a diverse subset of myristoylated proteins. Specifically binds the myristoyl moiety of a subset of N-terminally myristoylated proteins and is required for their localization. Binds myristoylated GNAT1 and is required for G-protein localization and trafficking in sensory neurons. Probably plays a role in trafficking proteins in photoreceptor cells. Plays important roles in mediating Src family kinase signals for the completion of cytokinesis via RAB11A.</text>
</comment>
<comment type="subunit">
    <text evidence="2 3 5">Interacts with CABP4; in the absence of calcium. May interact with GTP-bound ARL1. Interacts with ARL2 and ARL3 (GTP-bound forms); this promotes the release of myristoylated cargo proteins (By similarity). Found in a complex with ARL3, RP2 and UNC119; RP2 induces hydrolysis of GTP ARL3 in the complex, leading to the release of UNC119. Interacts with NPHP3 (when myristoylated). Interacts with CYS1 (when myristoylated). Interacts with MACIR; interaction only takes place when UNC119 is not liganded with myristoylated proteins (By similarity). Interacts with ARL1 and ARL3 GTP-bound forms (By similarity). Interacts with ARL2. Interacts with ARL2. Interacts with LCK; this interaction plays a crucial role in activation of LCK (By similarity). Interacts with FYN (By similarity). Interacts with RAB11A; in a cell cycle-dependent manner (By similarity). Interacts with LYN (via SH2 and SH3 domains); leading to LYN activation (By similarity). Interacts with DNM1; leading to a decrease of DNM1 GTPase activity (By similarity). Found in a complex with ABL1, ABL2, CRK and UNC119; leading to the inhibition of CRK phosphorylation by ABL kinases (By similarity). Interacts with CD44 (By similarity). Interacts with KLHL18 (via kelch repeats) (By similarity). Interacts with PPP3CA, PPP3CB and PPP3CC (By similarity). Interacts with USP48; this interaction promotes UNC119 stability (By similarity).</text>
</comment>
<comment type="subcellular location">
    <subcellularLocation>
        <location evidence="2">Cytoplasm</location>
        <location evidence="2">Cytoskeleton</location>
        <location evidence="2">Microtubule organizing center</location>
        <location evidence="2">Centrosome</location>
    </subcellularLocation>
    <subcellularLocation>
        <location evidence="2">Cytoplasm</location>
        <location evidence="2">Cytoskeleton</location>
        <location evidence="2">Spindle</location>
    </subcellularLocation>
    <subcellularLocation>
        <location evidence="2">Cytoplasm</location>
        <location evidence="2">Cytoskeleton</location>
        <location evidence="2">Spindle pole</location>
    </subcellularLocation>
    <text evidence="2">ocalizes to the centrosome in interphase cells and begins to translocate from the spindle pole to the spindle midzone after the onset of mitosis; it then localizes to the intercellular bridge in telophase cells and to the midbody in cytokinetic cells.</text>
</comment>
<comment type="developmental stage">
    <text>Begins to be highly expressed around postnatal day 5 in the outer retina when the photoreceptors begin to differentiate and rapidly increases in expression to reach the mature adult level by postnatal day 23.</text>
</comment>
<comment type="domain">
    <text evidence="2">Adopts an immunoglobulin-like beta-sandwich fold forming a hydrophobic cavity that captures N-terminally myristoylated target peptides. Phe residues within the hydrophobic beta sandwich are required for myristate binding (By similarity).</text>
</comment>
<comment type="PTM">
    <text evidence="3">Phosphorylation suppresses its interaction with KLHL18 and down-regulates its KLHL18-mediated degradation. Phosphorylated more under light conditions than dark conditions. Dephosphorylated by calcineurin.</text>
</comment>
<comment type="similarity">
    <text evidence="6">Belongs to the PDE6D/unc-119 family.</text>
</comment>
<organism>
    <name type="scientific">Rattus norvegicus</name>
    <name type="common">Rat</name>
    <dbReference type="NCBI Taxonomy" id="10116"/>
    <lineage>
        <taxon>Eukaryota</taxon>
        <taxon>Metazoa</taxon>
        <taxon>Chordata</taxon>
        <taxon>Craniata</taxon>
        <taxon>Vertebrata</taxon>
        <taxon>Euteleostomi</taxon>
        <taxon>Mammalia</taxon>
        <taxon>Eutheria</taxon>
        <taxon>Euarchontoglires</taxon>
        <taxon>Glires</taxon>
        <taxon>Rodentia</taxon>
        <taxon>Myomorpha</taxon>
        <taxon>Muroidea</taxon>
        <taxon>Muridae</taxon>
        <taxon>Murinae</taxon>
        <taxon>Rattus</taxon>
    </lineage>
</organism>
<gene>
    <name type="primary">Unc119</name>
    <name type="synonym">Rg4</name>
</gene>
<name>U119A_RAT</name>
<protein>
    <recommendedName>
        <fullName>Protein unc-119 homolog A</fullName>
    </recommendedName>
    <alternativeName>
        <fullName>Retinal protein 4</fullName>
        <shortName>rRG4</shortName>
    </alternativeName>
</protein>
<keyword id="KW-0963">Cytoplasm</keyword>
<keyword id="KW-0206">Cytoskeleton</keyword>
<keyword id="KW-0254">Endocytosis</keyword>
<keyword id="KW-0446">Lipid-binding</keyword>
<keyword id="KW-0597">Phosphoprotein</keyword>
<keyword id="KW-0653">Protein transport</keyword>
<keyword id="KW-1185">Reference proteome</keyword>
<keyword id="KW-0716">Sensory transduction</keyword>
<keyword id="KW-0813">Transport</keyword>
<keyword id="KW-0844">Vision</keyword>
<evidence type="ECO:0000250" key="1"/>
<evidence type="ECO:0000250" key="2">
    <source>
        <dbReference type="UniProtKB" id="Q13432"/>
    </source>
</evidence>
<evidence type="ECO:0000250" key="3">
    <source>
        <dbReference type="UniProtKB" id="Q9Z2R6"/>
    </source>
</evidence>
<evidence type="ECO:0000256" key="4">
    <source>
        <dbReference type="SAM" id="MobiDB-lite"/>
    </source>
</evidence>
<evidence type="ECO:0000269" key="5">
    <source>
    </source>
</evidence>
<evidence type="ECO:0000305" key="6"/>
<evidence type="ECO:0007744" key="7">
    <source>
    </source>
</evidence>
<sequence length="240" mass="27048">MKVKKGGGGTGPGAEPVPGASNRSVEPTREPGAEAESGSESEPEPGPGPRLGPLQGKQPIGPEDVLGLQRITGDYLCSPEENIYKIDFVRFKIRDMDSGTVLFEIKKPPVSERLPINRRDLDPNAGRFVRYQFTPAFLRLRQVGATVEFTVGDKPVNNFRMIERHYFRNQLLKSFDFHFGFCIPSSKNTCEHIYDFPPLSEELISEMIRHPYETQSDSFYFVDDRLVMHNKADYSYSGTP</sequence>
<feature type="chain" id="PRO_0000221214" description="Protein unc-119 homolog A">
    <location>
        <begin position="1"/>
        <end position="240"/>
    </location>
</feature>
<feature type="region of interest" description="Disordered" evidence="4">
    <location>
        <begin position="1"/>
        <end position="62"/>
    </location>
</feature>
<feature type="compositionally biased region" description="Gly residues" evidence="4">
    <location>
        <begin position="1"/>
        <end position="12"/>
    </location>
</feature>
<feature type="binding site" evidence="1">
    <location>
        <position position="131"/>
    </location>
    <ligand>
        <name>tetradecanoate</name>
        <dbReference type="ChEBI" id="CHEBI:30807"/>
    </ligand>
</feature>
<feature type="modified residue" description="Phosphoserine; by CK2" evidence="7">
    <location>
        <position position="37"/>
    </location>
</feature>
<feature type="modified residue" description="Phosphoserine; by CK2" evidence="7">
    <location>
        <position position="39"/>
    </location>
</feature>
<feature type="modified residue" description="Phosphoserine; by CK2" evidence="7">
    <location>
        <position position="41"/>
    </location>
</feature>